<sequence>MASFKIVIVCLALLVAVASARRRDMMSDDELDYHYSKRGIPCACDSDGPDIRSASLSGIVWMGSCPSGWKKCKSYYSIVADCCNQ</sequence>
<gene>
    <name type="ORF">v1g113210</name>
</gene>
<keyword id="KW-0025">Alternative splicing</keyword>
<keyword id="KW-0165">Cleavage on pair of basic residues</keyword>
<keyword id="KW-1015">Disulfide bond</keyword>
<keyword id="KW-0872">Ion channel impairing toxin</keyword>
<keyword id="KW-0528">Neurotoxin</keyword>
<keyword id="KW-1185">Reference proteome</keyword>
<keyword id="KW-0964">Secreted</keyword>
<keyword id="KW-0732">Signal</keyword>
<keyword id="KW-0800">Toxin</keyword>
<keyword id="KW-0738">Voltage-gated sodium channel impairing toxin</keyword>
<accession>P0CH90</accession>
<accession>A7SCE1</accession>
<accession>B1NWS5</accession>
<accession>B1NWT0</accession>
<accession>B1NWT1</accession>
<accession>B5L636</accession>
<name>NA237_NEMVE</name>
<organism>
    <name type="scientific">Nematostella vectensis</name>
    <name type="common">Starlet sea anemone</name>
    <dbReference type="NCBI Taxonomy" id="45351"/>
    <lineage>
        <taxon>Eukaryota</taxon>
        <taxon>Metazoa</taxon>
        <taxon>Cnidaria</taxon>
        <taxon>Anthozoa</taxon>
        <taxon>Hexacorallia</taxon>
        <taxon>Actiniaria</taxon>
        <taxon>Edwardsiidae</taxon>
        <taxon>Nematostella</taxon>
    </lineage>
</organism>
<protein>
    <recommendedName>
        <fullName evidence="8">N.vectensis toxin 1 4</fullName>
        <shortName evidence="8">Nv1</shortName>
    </recommendedName>
    <alternativeName>
        <fullName evidence="11">Neurotoxin Nv1-11</fullName>
    </alternativeName>
    <alternativeName>
        <fullName evidence="7">Neurotoxin Nv1-116.37.1</fullName>
    </alternativeName>
    <alternativeName>
        <fullName evidence="12">Neurotoxin Nv1-16</fullName>
    </alternativeName>
    <alternativeName>
        <fullName evidence="13">Neurotoxin Nv3-1</fullName>
    </alternativeName>
    <alternativeName>
        <fullName evidence="14">Neurotoxin Nv3-3</fullName>
    </alternativeName>
</protein>
<feature type="signal peptide" evidence="2">
    <location>
        <begin position="1"/>
        <end position="20"/>
    </location>
</feature>
<feature type="propeptide" id="PRO_0000398316" evidence="9">
    <location>
        <begin position="21"/>
        <end position="36"/>
    </location>
</feature>
<feature type="chain" id="PRO_5000319669" description="N.vectensis toxin 1 4" evidence="10">
    <location>
        <begin position="39"/>
        <end position="85"/>
    </location>
</feature>
<feature type="disulfide bond" evidence="1">
    <location>
        <begin position="42"/>
        <end position="82"/>
    </location>
</feature>
<feature type="disulfide bond" evidence="1">
    <location>
        <begin position="44"/>
        <end position="72"/>
    </location>
</feature>
<feature type="disulfide bond" evidence="1">
    <location>
        <begin position="65"/>
        <end position="83"/>
    </location>
</feature>
<feature type="splice variant" id="VSP_039749" description="In isoform 2." evidence="9">
    <original>RDMMSDDELDYHYSKRGIPCACDSDGPDIRSASLSGIVWMGSCPSGWKKCKSYYSIVADCCNQ</original>
    <variation>K</variation>
    <location>
        <begin position="23"/>
        <end position="85"/>
    </location>
</feature>
<feature type="sequence variant" description="In Nv1-11.">
    <original>A</original>
    <variation>T</variation>
    <location>
        <position position="2"/>
    </location>
</feature>
<feature type="sequence variant" description="In Nv1-11.">
    <original>R</original>
    <variation>S</variation>
    <location>
        <position position="22"/>
    </location>
</feature>
<feature type="sequence variant" description="In Nv1-16.">
    <original>D</original>
    <variation>N</variation>
    <location>
        <position position="24"/>
    </location>
</feature>
<feature type="sequence variant" description="In Nv3-1.">
    <original>D</original>
    <variation>T</variation>
    <location>
        <position position="29"/>
    </location>
</feature>
<feature type="sequence variant" description="In Nv1-11.">
    <original>L</original>
    <variation>R</variation>
    <location>
        <position position="31"/>
    </location>
</feature>
<feature type="sequence variant" description="In Nv3-1.">
    <original>D</original>
    <variation>E</variation>
    <location>
        <position position="32"/>
    </location>
</feature>
<feature type="sequence variant" description="In Nv3-1 and Nv3-3.">
    <original>Y</original>
    <variation>L</variation>
    <location>
        <position position="35"/>
    </location>
</feature>
<feature type="sequence variant" description="In Nv3-1 and Nv3-3.">
    <original>IP</original>
    <variation>FA</variation>
    <location>
        <begin position="40"/>
        <end position="41"/>
    </location>
</feature>
<feature type="sequence variant" description="In Nv3-1 and Nv3-3.">
    <original>DGPD</original>
    <variation>PG</variation>
    <location>
        <begin position="47"/>
        <end position="50"/>
    </location>
</feature>
<feature type="sequence variant" description="In Nv3-1.">
    <original>M</original>
    <variation>V</variation>
    <location>
        <position position="62"/>
    </location>
</feature>
<feature type="sequence variant" description="In Nv3-1.">
    <original>I</original>
    <variation>V</variation>
    <location>
        <position position="78"/>
    </location>
</feature>
<dbReference type="EMBL" id="EU124462">
    <property type="protein sequence ID" value="ABW97341.1"/>
    <property type="molecule type" value="Genomic_DNA"/>
</dbReference>
<dbReference type="EMBL" id="EU124467">
    <property type="protein sequence ID" value="ABW97346.1"/>
    <property type="molecule type" value="Genomic_DNA"/>
</dbReference>
<dbReference type="EMBL" id="EU124468">
    <property type="protein sequence ID" value="ABW97347.1"/>
    <property type="molecule type" value="Genomic_DNA"/>
</dbReference>
<dbReference type="EMBL" id="EU422968">
    <property type="protein sequence ID" value="ACB71117.1"/>
    <property type="molecule type" value="mRNA"/>
</dbReference>
<dbReference type="EMBL" id="EU422972">
    <property type="protein sequence ID" value="ACB71121.1"/>
    <property type="molecule type" value="mRNA"/>
</dbReference>
<dbReference type="EMBL" id="DS469622">
    <property type="protein sequence ID" value="EDO38671.1"/>
    <property type="status" value="ALT_SEQ"/>
    <property type="molecule type" value="Genomic_DNA"/>
</dbReference>
<dbReference type="RefSeq" id="XP_001630734.1">
    <property type="nucleotide sequence ID" value="XM_001630684.1"/>
</dbReference>
<dbReference type="RefSeq" id="XP_001630736.1">
    <property type="nucleotide sequence ID" value="XM_001630686.1"/>
</dbReference>
<dbReference type="SMR" id="P0CH90"/>
<dbReference type="TCDB" id="8.B.17.1.5">
    <property type="family name" value="the sea anemone peptide toxin class iii (shi) family"/>
</dbReference>
<dbReference type="HOGENOM" id="CLU_2944416_0_0_1"/>
<dbReference type="InParanoid" id="P0CH90"/>
<dbReference type="PhylomeDB" id="P0CH90"/>
<dbReference type="Proteomes" id="UP000001593">
    <property type="component" value="Unassembled WGS sequence"/>
</dbReference>
<dbReference type="GO" id="GO:0005576">
    <property type="term" value="C:extracellular region"/>
    <property type="evidence" value="ECO:0007669"/>
    <property type="project" value="UniProtKB-SubCell"/>
</dbReference>
<dbReference type="GO" id="GO:0017080">
    <property type="term" value="F:sodium channel regulator activity"/>
    <property type="evidence" value="ECO:0007669"/>
    <property type="project" value="UniProtKB-KW"/>
</dbReference>
<dbReference type="GO" id="GO:0090729">
    <property type="term" value="F:toxin activity"/>
    <property type="evidence" value="ECO:0007669"/>
    <property type="project" value="UniProtKB-KW"/>
</dbReference>
<dbReference type="Gene3D" id="2.20.20.10">
    <property type="entry name" value="Anthopleurin-A"/>
    <property type="match status" value="1"/>
</dbReference>
<dbReference type="InterPro" id="IPR023355">
    <property type="entry name" value="Myo_ane_neurotoxin_sf"/>
</dbReference>
<dbReference type="Pfam" id="PF00706">
    <property type="entry name" value="Toxin_4"/>
    <property type="match status" value="1"/>
</dbReference>
<dbReference type="SUPFAM" id="SSF57392">
    <property type="entry name" value="Defensin-like"/>
    <property type="match status" value="1"/>
</dbReference>
<evidence type="ECO:0000250" key="1">
    <source>
        <dbReference type="UniProtKB" id="P19651"/>
    </source>
</evidence>
<evidence type="ECO:0000255" key="2"/>
<evidence type="ECO:0000269" key="3">
    <source>
    </source>
</evidence>
<evidence type="ECO:0000269" key="4">
    <source>
    </source>
</evidence>
<evidence type="ECO:0000269" key="5">
    <source>
    </source>
</evidence>
<evidence type="ECO:0000269" key="6">
    <source>
    </source>
</evidence>
<evidence type="ECO:0000303" key="7">
    <source>
    </source>
</evidence>
<evidence type="ECO:0000303" key="8">
    <source>
    </source>
</evidence>
<evidence type="ECO:0000305" key="9"/>
<evidence type="ECO:0000305" key="10">
    <source>
    </source>
</evidence>
<evidence type="ECO:0000312" key="11">
    <source>
        <dbReference type="EMBL" id="ABW97341.1"/>
    </source>
</evidence>
<evidence type="ECO:0000312" key="12">
    <source>
        <dbReference type="EMBL" id="ABW97346.1"/>
    </source>
</evidence>
<evidence type="ECO:0000312" key="13">
    <source>
        <dbReference type="EMBL" id="ABW97347.1"/>
    </source>
</evidence>
<evidence type="ECO:0000312" key="14">
    <source>
        <dbReference type="EMBL" id="ACB71121.1"/>
    </source>
</evidence>
<proteinExistence type="evidence at protein level"/>
<comment type="function">
    <text evidence="3 4 5 6">Binds to site 3 of voltage-gated sodium channels and inhibits the inactivation process (PubMed:18538344). Is highly active on DmNav1/TipE (drosophila) and is only extremely weakly active on rat Nav1.4-beta-1/SCN4A-SCN1B, and on human Nav1.5-beta-1/SCN5A-beta-1 (PubMed:18538344). This reveals high specificity for arthropod over mammalian channels (PubMed:18538344). In vivo, when released into the medium, this recombinant toxin induces impaired swimming, paralysis and death of the crustacean A.nauplii within several hours (PubMed:22048953). Also causes paralysis of cherry shrimps immediately after injection at very low doses (PubMed:29424690). Its effect on zebrafish (D.rerio) larvae is also rapid, since it induces tail twitching accompanied by impaired swimming after 20 minutes and complete paralysis within 45 minutes (PubMed:22048953). It has also been observed to cause death of zebrafish larvae within 1 hour (PubMed:31134275).</text>
</comment>
<comment type="subcellular location">
    <subcellularLocation>
        <location evidence="3">Secreted</location>
    </subcellularLocation>
</comment>
<comment type="alternative products">
    <event type="alternative splicing"/>
    <isoform>
        <id>P0CH90-1</id>
        <name>1</name>
        <sequence type="displayed"/>
    </isoform>
    <isoform>
        <id>P0CH90-2</id>
        <name>2</name>
        <name>truncated</name>
        <sequence type="described" ref="VSP_039749"/>
    </isoform>
    <text>Intron retention discovered for all transcripts, no experimental confirmation available for this specific sequence.</text>
</comment>
<comment type="tissue specificity">
    <text evidence="4 5">Expressed in ectodermal glands and in clumps outside of the extodermal layer (PubMed:22048953). Is not expressed in nematocytes (PubMed:22048953). In adult female tissues, shows similar expression levels in mesenteries (gametes-producing tissue), tentacles, pharynx and physa (PubMed:29424690).</text>
</comment>
<comment type="developmental stage">
    <text evidence="3 4 5 6">Is detected in unfertilized eggs (at protein level) (PubMed:29424690, PubMed:31134275). Is also detected in late planulae, primary polyps and adults (both females and males) (at protein level) (PubMed:22048953, PubMed:29424690). Nv1 is transcribed throughout the complete life cycle and is found at multiple developmental stages including unfertilized eggs, blastulae, gastrulae, early planulae, planulae, metamorphosing planulae, primary polyps, juvenile polyps (2 and 4 months old), adult males, and adult females, with highest levels in juvenile polyps and adults (PubMed:18538344, PubMed:29424690). Importantly, Nv1 transcripts are not spliced in the embryo and planula due to intron retention and therefore Nv1 can be considered purely an adult toxin (PubMed:18538344).</text>
</comment>
<comment type="toxic dose">
    <text evidence="3">PD(50) is 76 nmol/kg into blowfly larvae.</text>
</comment>
<comment type="miscellaneous">
    <text>Nv1 toxin seems to be encoded by 8 different genes. 4 of them code for identical precursors, whereas 4 others code for very similar precursors. In the genome draft, 6 additional loci are also correlated to Nv1 toxin, but they are not predicted to be functional genes. This high similarity may be explained by concerted evolution.</text>
</comment>
<comment type="miscellaneous">
    <text evidence="9">The primary structure of the mature peptide is identical in 9 entries (AC B1NWS4, AC B1NWS1, AC B1NWR6, AC P0CH90, AC P0CH46, AC B1NWS8, AC A7SCE5, AC B1NWR7 and AC P0CH45). Additional information can be found in entry AC B1NWS4.</text>
</comment>
<comment type="miscellaneous">
    <molecule>Isoform 2</molecule>
    <text evidence="9">Due to an intron retention observed only in early life stages (embryo and planula).</text>
</comment>
<comment type="miscellaneous">
    <text evidence="3">Negative results: has no activity on the rat brain channel Nav1.2a-beta-1/SCN2A-SCN1B.</text>
</comment>
<comment type="similarity">
    <text evidence="9">Belongs to the sea anemone sodium channel inhibitory toxin family. Type II subfamily.</text>
</comment>
<comment type="sequence caution" evidence="9">
    <conflict type="erroneous gene model prediction">
        <sequence resource="EMBL-CDS" id="EDO38671"/>
    </conflict>
</comment>
<reference key="1">
    <citation type="journal article" date="2008" name="Mol. Biol. Evol.">
        <title>Concerted evolution of sea anemone neurotoxin genes is revealed through analysis of the Nematostella vectensis genome.</title>
        <authorList>
            <person name="Moran Y."/>
            <person name="Weinberger H."/>
            <person name="Sullivan J.C."/>
            <person name="Reitzel A.M."/>
            <person name="Finnerty J.R."/>
            <person name="Gurevitz M."/>
        </authorList>
    </citation>
    <scope>NUCLEOTIDE SEQUENCE [GENOMIC DNA]</scope>
    <source>
        <strain>Crane Marsh</strain>
        <strain>Neponset River Marsh</strain>
        <strain>Rhode River</strain>
    </source>
</reference>
<reference key="2">
    <citation type="journal article" date="2008" name="J. Mol. Biol.">
        <title>Intron retention as a posttranscriptional regulatory mechanism of neurotoxin expression at early life stages of the starlet anemone Nematostella vectensis.</title>
        <authorList>
            <person name="Moran Y."/>
            <person name="Weinberger H."/>
            <person name="Reitzel A.M."/>
            <person name="Sullivan J.C."/>
            <person name="Kahn R."/>
            <person name="Gordon D."/>
            <person name="Finnerty J.R."/>
            <person name="Gurevitz M."/>
        </authorList>
    </citation>
    <scope>NUCLEOTIDE SEQUENCE [MRNA]</scope>
    <scope>FUNCTION</scope>
    <scope>ALTERNATIVE SPLICING</scope>
    <scope>DEVELOPMENTAL STAGE</scope>
    <scope>TOXIC DOSE</scope>
    <source>
        <strain>Sippewissett Marsh</strain>
    </source>
</reference>
<reference key="3">
    <citation type="journal article" date="2007" name="Science">
        <title>Sea anemone genome reveals ancestral eumetazoan gene repertoire and genomic organization.</title>
        <authorList>
            <person name="Putnam N.H."/>
            <person name="Srivastava M."/>
            <person name="Hellsten U."/>
            <person name="Dirks B."/>
            <person name="Chapman J."/>
            <person name="Salamov A."/>
            <person name="Terry A."/>
            <person name="Shapiro H."/>
            <person name="Lindquist E."/>
            <person name="Kapitonov V.V."/>
            <person name="Jurka J."/>
            <person name="Genikhovich G."/>
            <person name="Grigoriev I.V."/>
            <person name="Lucas S.M."/>
            <person name="Steele R.E."/>
            <person name="Finnerty J.R."/>
            <person name="Technau U."/>
            <person name="Martindale M.Q."/>
            <person name="Rokhsar D.S."/>
        </authorList>
    </citation>
    <scope>NUCLEOTIDE SEQUENCE [LARGE SCALE GENOMIC DNA]</scope>
    <source>
        <strain>CH2 X CH6</strain>
    </source>
</reference>
<reference key="4">
    <citation type="journal article" date="2012" name="Proc. R. Soc. B">
        <title>Neurotoxin localization to ectodermal gland cells uncovers an alternative mechanism of venom delivery in sea anemones.</title>
        <authorList>
            <person name="Moran Y."/>
            <person name="Genikhovich G."/>
            <person name="Gordon D."/>
            <person name="Wienkoop S."/>
            <person name="Zenkert C."/>
            <person name="Ozbek S."/>
            <person name="Technau U."/>
            <person name="Gurevitz M."/>
        </authorList>
    </citation>
    <scope>FUNCTION</scope>
    <scope>TISSUE SPECIFICITY</scope>
    <scope>DEVELOPMENTAL STAGE</scope>
</reference>
<reference key="5">
    <citation type="journal article" date="2018" name="Elife">
        <title>Dynamics of venom composition across a complex life cycle.</title>
        <authorList>
            <person name="Columbus-Shenkar Y.Y."/>
            <person name="Sachkova M.Y."/>
            <person name="Macrander J."/>
            <person name="Fridrich A."/>
            <person name="Modepalli V."/>
            <person name="Reitzel A.M."/>
            <person name="Sunagar K."/>
            <person name="Moran Y."/>
        </authorList>
    </citation>
    <scope>FUNCTION</scope>
    <scope>DEVELOPMENTAL STAGE</scope>
</reference>
<reference key="6">
    <citation type="journal article" date="2019" name="Mol. Biol. Evol.">
        <title>The birth and death of toxins with distinct functions: a case study in the sea anemone Nematostella.</title>
        <authorList>
            <person name="Sachkova M.Y."/>
            <person name="Singer S.A."/>
            <person name="Macrander J."/>
            <person name="Reitzel A.M."/>
            <person name="Peigneur S."/>
            <person name="Tytgat J."/>
            <person name="Moran Y."/>
        </authorList>
    </citation>
    <scope>FUNCTION</scope>
    <scope>IDENTIFICATION BY MASS SPECTROMETRY</scope>
    <scope>DEVELOPMENTAL STAGE</scope>
</reference>